<feature type="chain" id="PRO_0000141348" description="Probable cobyric acid synthase">
    <location>
        <begin position="1"/>
        <end position="492"/>
    </location>
</feature>
<feature type="domain" description="GATase cobBQ-type">
    <location>
        <begin position="252"/>
        <end position="444"/>
    </location>
</feature>
<feature type="active site" description="Nucleophile" evidence="1">
    <location>
        <position position="330"/>
    </location>
</feature>
<feature type="active site" evidence="1">
    <location>
        <position position="436"/>
    </location>
</feature>
<protein>
    <recommendedName>
        <fullName>Probable cobyric acid synthase</fullName>
    </recommendedName>
</protein>
<sequence>MAEFIMVVGTSSNSGKTTITAGLCRILANKGYKVAPFKSQNMSLNSRVAKEDGEIAIAQYTQSLACRVEPSVHFNPILLKPKGNFISQVIVHGRPYKDMNYNEYRKNKDFFLKKIKESLEILDREYDYVIMEGAGSCCEINLLKDDIANLRIAELVNAKAILVADIDRGGVFASIYGTIKLLPENWRKLIKGIIINKFRGNVEVLKEGIEKIEELTGIPVLGIVPYDENLVLPEEDSQVLQSMRSFGNAKSGVEINVVRFSKISNFTDLDPLRYDAFIKFIDFDDDITGDILIFPGTRSSTKEAYYLKQHNFDEKVLEFLKDGGIVIGICGGYQVLGKELIDKEKKESDVGDIEGLKIFDAKTYFGNDKVVKNSCGFLEIDNKTFNVKGYEIHEGFTYSKEKPLIKIERGFGNCGNGFDGSIKKFGDGLAIGTYFHGIFENYEFRNYIINLIRKRKGLDEIYGDSYKDSIEKSLNYFAEVVERSVNLKPLGI</sequence>
<name>COBQ_METJA</name>
<evidence type="ECO:0000250" key="1"/>
<evidence type="ECO:0000305" key="2"/>
<keyword id="KW-0169">Cobalamin biosynthesis</keyword>
<keyword id="KW-0315">Glutamine amidotransferase</keyword>
<keyword id="KW-1185">Reference proteome</keyword>
<accession>Q57908</accession>
<gene>
    <name type="primary">cobQ</name>
    <name type="ordered locus">MJ0484</name>
</gene>
<proteinExistence type="inferred from homology"/>
<organism>
    <name type="scientific">Methanocaldococcus jannaschii (strain ATCC 43067 / DSM 2661 / JAL-1 / JCM 10045 / NBRC 100440)</name>
    <name type="common">Methanococcus jannaschii</name>
    <dbReference type="NCBI Taxonomy" id="243232"/>
    <lineage>
        <taxon>Archaea</taxon>
        <taxon>Methanobacteriati</taxon>
        <taxon>Methanobacteriota</taxon>
        <taxon>Methanomada group</taxon>
        <taxon>Methanococci</taxon>
        <taxon>Methanococcales</taxon>
        <taxon>Methanocaldococcaceae</taxon>
        <taxon>Methanocaldococcus</taxon>
    </lineage>
</organism>
<dbReference type="EMBL" id="L77117">
    <property type="protein sequence ID" value="AAB98475.1"/>
    <property type="status" value="ALT_INIT"/>
    <property type="molecule type" value="Genomic_DNA"/>
</dbReference>
<dbReference type="PIR" id="D64360">
    <property type="entry name" value="D64360"/>
</dbReference>
<dbReference type="RefSeq" id="WP_064496916.1">
    <property type="nucleotide sequence ID" value="NC_000909.1"/>
</dbReference>
<dbReference type="SMR" id="Q57908"/>
<dbReference type="FunCoup" id="Q57908">
    <property type="interactions" value="110"/>
</dbReference>
<dbReference type="STRING" id="243232.MJ_0484"/>
<dbReference type="PaxDb" id="243232-MJ_0484"/>
<dbReference type="EnsemblBacteria" id="AAB98475">
    <property type="protein sequence ID" value="AAB98475"/>
    <property type="gene ID" value="MJ_0484"/>
</dbReference>
<dbReference type="GeneID" id="1451346"/>
<dbReference type="KEGG" id="mja:MJ_0484"/>
<dbReference type="eggNOG" id="arCOG00105">
    <property type="taxonomic scope" value="Archaea"/>
</dbReference>
<dbReference type="HOGENOM" id="CLU_019250_2_2_2"/>
<dbReference type="InParanoid" id="Q57908"/>
<dbReference type="OrthoDB" id="53136at2157"/>
<dbReference type="PhylomeDB" id="Q57908"/>
<dbReference type="UniPathway" id="UPA00148"/>
<dbReference type="Proteomes" id="UP000000805">
    <property type="component" value="Chromosome"/>
</dbReference>
<dbReference type="GO" id="GO:0015420">
    <property type="term" value="F:ABC-type vitamin B12 transporter activity"/>
    <property type="evidence" value="ECO:0007669"/>
    <property type="project" value="UniProtKB-UniRule"/>
</dbReference>
<dbReference type="GO" id="GO:0003824">
    <property type="term" value="F:catalytic activity"/>
    <property type="evidence" value="ECO:0007669"/>
    <property type="project" value="InterPro"/>
</dbReference>
<dbReference type="GO" id="GO:0009236">
    <property type="term" value="P:cobalamin biosynthetic process"/>
    <property type="evidence" value="ECO:0007669"/>
    <property type="project" value="UniProtKB-UniRule"/>
</dbReference>
<dbReference type="CDD" id="cd05389">
    <property type="entry name" value="CobQ_N"/>
    <property type="match status" value="1"/>
</dbReference>
<dbReference type="CDD" id="cd01750">
    <property type="entry name" value="GATase1_CobQ"/>
    <property type="match status" value="1"/>
</dbReference>
<dbReference type="Gene3D" id="3.40.50.880">
    <property type="match status" value="1"/>
</dbReference>
<dbReference type="Gene3D" id="3.40.50.300">
    <property type="entry name" value="P-loop containing nucleotide triphosphate hydrolases"/>
    <property type="match status" value="1"/>
</dbReference>
<dbReference type="HAMAP" id="MF_00028">
    <property type="entry name" value="CobQ"/>
    <property type="match status" value="1"/>
</dbReference>
<dbReference type="InterPro" id="IPR029062">
    <property type="entry name" value="Class_I_gatase-like"/>
</dbReference>
<dbReference type="InterPro" id="IPR002586">
    <property type="entry name" value="CobQ/CobB/MinD/ParA_Nub-bd_dom"/>
</dbReference>
<dbReference type="InterPro" id="IPR033949">
    <property type="entry name" value="CobQ_GATase1"/>
</dbReference>
<dbReference type="InterPro" id="IPR047045">
    <property type="entry name" value="CobQ_N"/>
</dbReference>
<dbReference type="InterPro" id="IPR004459">
    <property type="entry name" value="CobQ_synth"/>
</dbReference>
<dbReference type="InterPro" id="IPR011698">
    <property type="entry name" value="GATase_3"/>
</dbReference>
<dbReference type="InterPro" id="IPR027417">
    <property type="entry name" value="P-loop_NTPase"/>
</dbReference>
<dbReference type="NCBIfam" id="TIGR00313">
    <property type="entry name" value="cobQ"/>
    <property type="match status" value="1"/>
</dbReference>
<dbReference type="NCBIfam" id="NF001989">
    <property type="entry name" value="PRK00784.1"/>
    <property type="match status" value="1"/>
</dbReference>
<dbReference type="PANTHER" id="PTHR21343:SF1">
    <property type="entry name" value="COBYRIC ACID SYNTHASE"/>
    <property type="match status" value="1"/>
</dbReference>
<dbReference type="PANTHER" id="PTHR21343">
    <property type="entry name" value="DETHIOBIOTIN SYNTHETASE"/>
    <property type="match status" value="1"/>
</dbReference>
<dbReference type="Pfam" id="PF01656">
    <property type="entry name" value="CbiA"/>
    <property type="match status" value="1"/>
</dbReference>
<dbReference type="Pfam" id="PF07685">
    <property type="entry name" value="GATase_3"/>
    <property type="match status" value="1"/>
</dbReference>
<dbReference type="SUPFAM" id="SSF52317">
    <property type="entry name" value="Class I glutamine amidotransferase-like"/>
    <property type="match status" value="1"/>
</dbReference>
<dbReference type="SUPFAM" id="SSF52540">
    <property type="entry name" value="P-loop containing nucleoside triphosphate hydrolases"/>
    <property type="match status" value="1"/>
</dbReference>
<dbReference type="PROSITE" id="PS51274">
    <property type="entry name" value="GATASE_COBBQ"/>
    <property type="match status" value="1"/>
</dbReference>
<reference key="1">
    <citation type="journal article" date="1996" name="Science">
        <title>Complete genome sequence of the methanogenic archaeon, Methanococcus jannaschii.</title>
        <authorList>
            <person name="Bult C.J."/>
            <person name="White O."/>
            <person name="Olsen G.J."/>
            <person name="Zhou L."/>
            <person name="Fleischmann R.D."/>
            <person name="Sutton G.G."/>
            <person name="Blake J.A."/>
            <person name="FitzGerald L.M."/>
            <person name="Clayton R.A."/>
            <person name="Gocayne J.D."/>
            <person name="Kerlavage A.R."/>
            <person name="Dougherty B.A."/>
            <person name="Tomb J.-F."/>
            <person name="Adams M.D."/>
            <person name="Reich C.I."/>
            <person name="Overbeek R."/>
            <person name="Kirkness E.F."/>
            <person name="Weinstock K.G."/>
            <person name="Merrick J.M."/>
            <person name="Glodek A."/>
            <person name="Scott J.L."/>
            <person name="Geoghagen N.S.M."/>
            <person name="Weidman J.F."/>
            <person name="Fuhrmann J.L."/>
            <person name="Nguyen D."/>
            <person name="Utterback T.R."/>
            <person name="Kelley J.M."/>
            <person name="Peterson J.D."/>
            <person name="Sadow P.W."/>
            <person name="Hanna M.C."/>
            <person name="Cotton M.D."/>
            <person name="Roberts K.M."/>
            <person name="Hurst M.A."/>
            <person name="Kaine B.P."/>
            <person name="Borodovsky M."/>
            <person name="Klenk H.-P."/>
            <person name="Fraser C.M."/>
            <person name="Smith H.O."/>
            <person name="Woese C.R."/>
            <person name="Venter J.C."/>
        </authorList>
    </citation>
    <scope>NUCLEOTIDE SEQUENCE [LARGE SCALE GENOMIC DNA]</scope>
    <source>
        <strain>ATCC 43067 / DSM 2661 / JAL-1 / JCM 10045 / NBRC 100440</strain>
    </source>
</reference>
<comment type="function">
    <text evidence="1">Catalyzes amidations at positions B, D, E, and G on adenosylcobyrinic A,C-diamide. NH(2) groups are provided by glutamine, and one molecule of ATP is hydrogenolyzed for each amidation (By similarity).</text>
</comment>
<comment type="pathway">
    <text>Cofactor biosynthesis; adenosylcobalamin biosynthesis.</text>
</comment>
<comment type="similarity">
    <text evidence="2">Belongs to the CobB/CobQ family. CobQ subfamily.</text>
</comment>
<comment type="sequence caution" evidence="2">
    <conflict type="erroneous initiation">
        <sequence resource="EMBL-CDS" id="AAB98475"/>
    </conflict>
</comment>